<name>WECF_ECO24</name>
<sequence length="359" mass="40489">MTVLIHVLGSDIPHHNRTVLRFFNDALAATSEHAREFMVVGKDDGLSDSCPALSVQFFPGKKSLAEAVIAKAKANRQQRFFFHGQFNPTLWLALLSGGIKPSQFFWHIWGADLYELSSGLRYKLFYPLRRLAQKRVGCVFATRGDLSFFAKTHPKVRGELLYFPTRMDPSLNTMANDRQREGKMTILVGNSGDRSNDHIAALCAVHQQFGDTVKVVVPMGYPPNNEAYIEEVRQAGLELFSEENLQILSEKLEFDAYLALLRQCDLGYFIFARQQGIGTLCLLIQAGIPCVLNRENPFWQDMTEQHLPVLFTTDDLNEDIVREAQRQLASVDKNTIAFFSPNYLQGWQRALAIAAGEVA</sequence>
<reference key="1">
    <citation type="journal article" date="2008" name="J. Bacteriol.">
        <title>The pangenome structure of Escherichia coli: comparative genomic analysis of E. coli commensal and pathogenic isolates.</title>
        <authorList>
            <person name="Rasko D.A."/>
            <person name="Rosovitz M.J."/>
            <person name="Myers G.S.A."/>
            <person name="Mongodin E.F."/>
            <person name="Fricke W.F."/>
            <person name="Gajer P."/>
            <person name="Crabtree J."/>
            <person name="Sebaihia M."/>
            <person name="Thomson N.R."/>
            <person name="Chaudhuri R."/>
            <person name="Henderson I.R."/>
            <person name="Sperandio V."/>
            <person name="Ravel J."/>
        </authorList>
    </citation>
    <scope>NUCLEOTIDE SEQUENCE [LARGE SCALE GENOMIC DNA]</scope>
    <source>
        <strain>E24377A / ETEC</strain>
    </source>
</reference>
<evidence type="ECO:0000255" key="1">
    <source>
        <dbReference type="HAMAP-Rule" id="MF_01002"/>
    </source>
</evidence>
<keyword id="KW-0997">Cell inner membrane</keyword>
<keyword id="KW-1003">Cell membrane</keyword>
<keyword id="KW-0328">Glycosyltransferase</keyword>
<keyword id="KW-0472">Membrane</keyword>
<keyword id="KW-1185">Reference proteome</keyword>
<keyword id="KW-0808">Transferase</keyword>
<organism>
    <name type="scientific">Escherichia coli O139:H28 (strain E24377A / ETEC)</name>
    <dbReference type="NCBI Taxonomy" id="331111"/>
    <lineage>
        <taxon>Bacteria</taxon>
        <taxon>Pseudomonadati</taxon>
        <taxon>Pseudomonadota</taxon>
        <taxon>Gammaproteobacteria</taxon>
        <taxon>Enterobacterales</taxon>
        <taxon>Enterobacteriaceae</taxon>
        <taxon>Escherichia</taxon>
    </lineage>
</organism>
<gene>
    <name evidence="1" type="primary">wecF</name>
    <name evidence="1" type="synonym">rffT</name>
    <name type="ordered locus">EcE24377A_4305</name>
</gene>
<dbReference type="EC" id="2.4.1.325" evidence="1"/>
<dbReference type="EMBL" id="CP000800">
    <property type="protein sequence ID" value="ABV19305.1"/>
    <property type="molecule type" value="Genomic_DNA"/>
</dbReference>
<dbReference type="RefSeq" id="WP_000217240.1">
    <property type="nucleotide sequence ID" value="NC_009801.1"/>
</dbReference>
<dbReference type="SMR" id="A7ZTZ6"/>
<dbReference type="CAZy" id="GT56">
    <property type="family name" value="Glycosyltransferase Family 56"/>
</dbReference>
<dbReference type="KEGG" id="ecw:EcE24377A_4305"/>
<dbReference type="HOGENOM" id="CLU_066584_0_0_6"/>
<dbReference type="UniPathway" id="UPA00566"/>
<dbReference type="Proteomes" id="UP000001122">
    <property type="component" value="Chromosome"/>
</dbReference>
<dbReference type="GO" id="GO:0005886">
    <property type="term" value="C:plasma membrane"/>
    <property type="evidence" value="ECO:0007669"/>
    <property type="project" value="UniProtKB-SubCell"/>
</dbReference>
<dbReference type="GO" id="GO:0102031">
    <property type="term" value="F:4-acetamido-4,6-dideoxy-D-galactose transferase activity"/>
    <property type="evidence" value="ECO:0007669"/>
    <property type="project" value="UniProtKB-EC"/>
</dbReference>
<dbReference type="GO" id="GO:0008417">
    <property type="term" value="F:fucosyltransferase activity"/>
    <property type="evidence" value="ECO:0007669"/>
    <property type="project" value="InterPro"/>
</dbReference>
<dbReference type="GO" id="GO:0009246">
    <property type="term" value="P:enterobacterial common antigen biosynthetic process"/>
    <property type="evidence" value="ECO:0007669"/>
    <property type="project" value="UniProtKB-UniRule"/>
</dbReference>
<dbReference type="GO" id="GO:0036065">
    <property type="term" value="P:fucosylation"/>
    <property type="evidence" value="ECO:0007669"/>
    <property type="project" value="InterPro"/>
</dbReference>
<dbReference type="HAMAP" id="MF_01002">
    <property type="entry name" value="WecF_RffT"/>
    <property type="match status" value="1"/>
</dbReference>
<dbReference type="InterPro" id="IPR009993">
    <property type="entry name" value="WecF"/>
</dbReference>
<dbReference type="NCBIfam" id="NF002752">
    <property type="entry name" value="PRK02797.1-1"/>
    <property type="match status" value="1"/>
</dbReference>
<dbReference type="NCBIfam" id="NF002753">
    <property type="entry name" value="PRK02797.1-2"/>
    <property type="match status" value="1"/>
</dbReference>
<dbReference type="NCBIfam" id="NF002754">
    <property type="entry name" value="PRK02797.1-3"/>
    <property type="match status" value="1"/>
</dbReference>
<dbReference type="Pfam" id="PF07429">
    <property type="entry name" value="Glyco_transf_56"/>
    <property type="match status" value="1"/>
</dbReference>
<comment type="function">
    <text evidence="1">Catalyzes the synthesis of Und-PP-GlcNAc-ManNAcA-Fuc4NAc (Lipid III), the third lipid-linked intermediate involved in ECA synthesis.</text>
</comment>
<comment type="catalytic activity">
    <reaction evidence="1">
        <text>beta-D-ManNAcA-(1-&gt;4)-alpha-D-GlcNAc-di-trans,octa-cis-undecaprenyl diphosphate + dTDP-4-acetamido-4,6-dideoxy-alpha-D-galactose = alpha-D-FucNAc4-(1-&gt;4)-beta-D-ManNAcA-(1-&gt;4)-D-GlcNAc-undecaprenyl diphosphate + dTDP + H(+)</text>
        <dbReference type="Rhea" id="RHEA:28759"/>
        <dbReference type="ChEBI" id="CHEBI:15378"/>
        <dbReference type="ChEBI" id="CHEBI:58369"/>
        <dbReference type="ChEBI" id="CHEBI:61495"/>
        <dbReference type="ChEBI" id="CHEBI:61496"/>
        <dbReference type="ChEBI" id="CHEBI:68493"/>
        <dbReference type="EC" id="2.4.1.325"/>
    </reaction>
</comment>
<comment type="pathway">
    <text evidence="1">Bacterial outer membrane biogenesis; enterobacterial common antigen biosynthesis.</text>
</comment>
<comment type="subcellular location">
    <subcellularLocation>
        <location evidence="1">Cell inner membrane</location>
        <topology evidence="1">Peripheral membrane protein</topology>
    </subcellularLocation>
</comment>
<comment type="similarity">
    <text evidence="1">Belongs to the glycosyltransferase 56 family.</text>
</comment>
<feature type="chain" id="PRO_1000062740" description="TDP-N-acetylfucosamine:lipid II N-acetylfucosaminyltransferase">
    <location>
        <begin position="1"/>
        <end position="359"/>
    </location>
</feature>
<protein>
    <recommendedName>
        <fullName evidence="1">TDP-N-acetylfucosamine:lipid II N-acetylfucosaminyltransferase</fullName>
        <ecNumber evidence="1">2.4.1.325</ecNumber>
    </recommendedName>
    <alternativeName>
        <fullName evidence="1">4-alpha-L-fucosyltransferase</fullName>
    </alternativeName>
    <alternativeName>
        <fullName evidence="1">TDP-Fuc4NAc:lipid II Fuc4NAc transferase</fullName>
        <shortName evidence="1">Fuc4NAc transferase</shortName>
    </alternativeName>
</protein>
<proteinExistence type="inferred from homology"/>
<accession>A7ZTZ6</accession>